<protein>
    <recommendedName>
        <fullName>Guanylate kinase</fullName>
        <ecNumber evidence="3">2.7.4.8</ecNumber>
    </recommendedName>
    <alternativeName>
        <fullName>GMP kinase</fullName>
    </alternativeName>
</protein>
<keyword id="KW-0002">3D-structure</keyword>
<keyword id="KW-0007">Acetylation</keyword>
<keyword id="KW-0067">ATP-binding</keyword>
<keyword id="KW-0903">Direct protein sequencing</keyword>
<keyword id="KW-0418">Kinase</keyword>
<keyword id="KW-0547">Nucleotide-binding</keyword>
<keyword id="KW-0597">Phosphoprotein</keyword>
<keyword id="KW-1185">Reference proteome</keyword>
<keyword id="KW-0808">Transferase</keyword>
<gene>
    <name type="primary">GUK1</name>
    <name type="ordered locus">YDR454C</name>
    <name type="ORF">D9461.39</name>
</gene>
<dbReference type="EC" id="2.7.4.8" evidence="3"/>
<dbReference type="EMBL" id="L04683">
    <property type="protein sequence ID" value="AAA34657.1"/>
    <property type="molecule type" value="Genomic_DNA"/>
</dbReference>
<dbReference type="EMBL" id="U33007">
    <property type="protein sequence ID" value="AAB64881.1"/>
    <property type="molecule type" value="Genomic_DNA"/>
</dbReference>
<dbReference type="EMBL" id="BK006938">
    <property type="protein sequence ID" value="DAA12289.1"/>
    <property type="molecule type" value="Genomic_DNA"/>
</dbReference>
<dbReference type="PIR" id="A45097">
    <property type="entry name" value="KIBYGU"/>
</dbReference>
<dbReference type="RefSeq" id="NP_010742.1">
    <property type="nucleotide sequence ID" value="NM_001180762.1"/>
</dbReference>
<dbReference type="PDB" id="1EX6">
    <property type="method" value="X-ray"/>
    <property type="resolution" value="2.30 A"/>
    <property type="chains" value="A/B=2-187"/>
</dbReference>
<dbReference type="PDB" id="1EX7">
    <property type="method" value="X-ray"/>
    <property type="resolution" value="1.90 A"/>
    <property type="chains" value="A=2-187"/>
</dbReference>
<dbReference type="PDB" id="1GKY">
    <property type="method" value="X-ray"/>
    <property type="resolution" value="2.00 A"/>
    <property type="chains" value="A=2-187"/>
</dbReference>
<dbReference type="PDB" id="4F4J">
    <property type="method" value="X-ray"/>
    <property type="resolution" value="2.45 A"/>
    <property type="chains" value="A/B=1-187"/>
</dbReference>
<dbReference type="PDBsum" id="1EX6"/>
<dbReference type="PDBsum" id="1EX7"/>
<dbReference type="PDBsum" id="1GKY"/>
<dbReference type="PDBsum" id="4F4J"/>
<dbReference type="SMR" id="P15454"/>
<dbReference type="BioGRID" id="32509">
    <property type="interactions" value="201"/>
</dbReference>
<dbReference type="DIP" id="DIP-6721N"/>
<dbReference type="FunCoup" id="P15454">
    <property type="interactions" value="677"/>
</dbReference>
<dbReference type="IntAct" id="P15454">
    <property type="interactions" value="2"/>
</dbReference>
<dbReference type="MINT" id="P15454"/>
<dbReference type="STRING" id="4932.YDR454C"/>
<dbReference type="iPTMnet" id="P15454"/>
<dbReference type="PaxDb" id="4932-YDR454C"/>
<dbReference type="PeptideAtlas" id="P15454"/>
<dbReference type="TopDownProteomics" id="P15454"/>
<dbReference type="EnsemblFungi" id="YDR454C_mRNA">
    <property type="protein sequence ID" value="YDR454C"/>
    <property type="gene ID" value="YDR454C"/>
</dbReference>
<dbReference type="GeneID" id="852065"/>
<dbReference type="KEGG" id="sce:YDR454C"/>
<dbReference type="AGR" id="SGD:S000002862"/>
<dbReference type="SGD" id="S000002862">
    <property type="gene designation" value="GUK1"/>
</dbReference>
<dbReference type="VEuPathDB" id="FungiDB:YDR454C"/>
<dbReference type="eggNOG" id="KOG0707">
    <property type="taxonomic scope" value="Eukaryota"/>
</dbReference>
<dbReference type="GeneTree" id="ENSGT00940000155815"/>
<dbReference type="HOGENOM" id="CLU_001715_0_4_1"/>
<dbReference type="InParanoid" id="P15454"/>
<dbReference type="OMA" id="EWAVVHG"/>
<dbReference type="OrthoDB" id="6334211at2759"/>
<dbReference type="BioCyc" id="MetaCyc:MONOMER3O-102"/>
<dbReference type="BioCyc" id="YEAST:MONOMER3O-102"/>
<dbReference type="BRENDA" id="2.7.4.8">
    <property type="organism ID" value="984"/>
</dbReference>
<dbReference type="Reactome" id="R-SCE-499943">
    <property type="pathway name" value="Interconversion of nucleotide di- and triphosphates"/>
</dbReference>
<dbReference type="Reactome" id="R-SCE-9748787">
    <property type="pathway name" value="Azathioprine ADME"/>
</dbReference>
<dbReference type="BioGRID-ORCS" id="852065">
    <property type="hits" value="0 hits in 10 CRISPR screens"/>
</dbReference>
<dbReference type="CD-CODE" id="E03F929F">
    <property type="entry name" value="Stress granule"/>
</dbReference>
<dbReference type="EvolutionaryTrace" id="P15454"/>
<dbReference type="PRO" id="PR:P15454"/>
<dbReference type="Proteomes" id="UP000002311">
    <property type="component" value="Chromosome IV"/>
</dbReference>
<dbReference type="RNAct" id="P15454">
    <property type="molecule type" value="protein"/>
</dbReference>
<dbReference type="GO" id="GO:0005737">
    <property type="term" value="C:cytoplasm"/>
    <property type="evidence" value="ECO:0007005"/>
    <property type="project" value="SGD"/>
</dbReference>
<dbReference type="GO" id="GO:0005829">
    <property type="term" value="C:cytosol"/>
    <property type="evidence" value="ECO:0000318"/>
    <property type="project" value="GO_Central"/>
</dbReference>
<dbReference type="GO" id="GO:0005634">
    <property type="term" value="C:nucleus"/>
    <property type="evidence" value="ECO:0007005"/>
    <property type="project" value="SGD"/>
</dbReference>
<dbReference type="GO" id="GO:0005524">
    <property type="term" value="F:ATP binding"/>
    <property type="evidence" value="ECO:0007669"/>
    <property type="project" value="UniProtKB-KW"/>
</dbReference>
<dbReference type="GO" id="GO:0004385">
    <property type="term" value="F:guanylate kinase activity"/>
    <property type="evidence" value="ECO:0000314"/>
    <property type="project" value="SGD"/>
</dbReference>
<dbReference type="GO" id="GO:0046711">
    <property type="term" value="P:GDP biosynthetic process"/>
    <property type="evidence" value="ECO:0000315"/>
    <property type="project" value="SGD"/>
</dbReference>
<dbReference type="GO" id="GO:0006163">
    <property type="term" value="P:purine nucleotide metabolic process"/>
    <property type="evidence" value="ECO:0000250"/>
    <property type="project" value="UniProtKB"/>
</dbReference>
<dbReference type="CDD" id="cd00071">
    <property type="entry name" value="GMPK"/>
    <property type="match status" value="1"/>
</dbReference>
<dbReference type="FunFam" id="3.30.63.10:FF:000002">
    <property type="entry name" value="Guanylate kinase 1"/>
    <property type="match status" value="1"/>
</dbReference>
<dbReference type="FunFam" id="3.40.50.300:FF:000776">
    <property type="entry name" value="Guanylate kinase 2"/>
    <property type="match status" value="1"/>
</dbReference>
<dbReference type="Gene3D" id="3.30.63.10">
    <property type="entry name" value="Guanylate Kinase phosphate binding domain"/>
    <property type="match status" value="1"/>
</dbReference>
<dbReference type="Gene3D" id="3.40.50.300">
    <property type="entry name" value="P-loop containing nucleotide triphosphate hydrolases"/>
    <property type="match status" value="1"/>
</dbReference>
<dbReference type="HAMAP" id="MF_00328">
    <property type="entry name" value="Guanylate_kinase"/>
    <property type="match status" value="1"/>
</dbReference>
<dbReference type="InterPro" id="IPR008145">
    <property type="entry name" value="GK/Ca_channel_bsu"/>
</dbReference>
<dbReference type="InterPro" id="IPR008144">
    <property type="entry name" value="Guanylate_kin-like_dom"/>
</dbReference>
<dbReference type="InterPro" id="IPR017665">
    <property type="entry name" value="Guanylate_kinase"/>
</dbReference>
<dbReference type="InterPro" id="IPR020590">
    <property type="entry name" value="Guanylate_kinase_CS"/>
</dbReference>
<dbReference type="InterPro" id="IPR027417">
    <property type="entry name" value="P-loop_NTPase"/>
</dbReference>
<dbReference type="NCBIfam" id="TIGR03263">
    <property type="entry name" value="guanyl_kin"/>
    <property type="match status" value="1"/>
</dbReference>
<dbReference type="PANTHER" id="PTHR23117:SF13">
    <property type="entry name" value="GUANYLATE KINASE"/>
    <property type="match status" value="1"/>
</dbReference>
<dbReference type="PANTHER" id="PTHR23117">
    <property type="entry name" value="GUANYLATE KINASE-RELATED"/>
    <property type="match status" value="1"/>
</dbReference>
<dbReference type="Pfam" id="PF00625">
    <property type="entry name" value="Guanylate_kin"/>
    <property type="match status" value="1"/>
</dbReference>
<dbReference type="SMART" id="SM00072">
    <property type="entry name" value="GuKc"/>
    <property type="match status" value="1"/>
</dbReference>
<dbReference type="SUPFAM" id="SSF52540">
    <property type="entry name" value="P-loop containing nucleoside triphosphate hydrolases"/>
    <property type="match status" value="1"/>
</dbReference>
<dbReference type="PROSITE" id="PS00856">
    <property type="entry name" value="GUANYLATE_KINASE_1"/>
    <property type="match status" value="1"/>
</dbReference>
<dbReference type="PROSITE" id="PS50052">
    <property type="entry name" value="GUANYLATE_KINASE_2"/>
    <property type="match status" value="1"/>
</dbReference>
<evidence type="ECO:0000255" key="1">
    <source>
        <dbReference type="PROSITE-ProRule" id="PRU00100"/>
    </source>
</evidence>
<evidence type="ECO:0000269" key="2">
    <source>
    </source>
</evidence>
<evidence type="ECO:0000269" key="3">
    <source>
    </source>
</evidence>
<evidence type="ECO:0000269" key="4">
    <source>
    </source>
</evidence>
<evidence type="ECO:0000269" key="5">
    <source>
    </source>
</evidence>
<evidence type="ECO:0000269" key="6">
    <source>
    </source>
</evidence>
<evidence type="ECO:0000305" key="7"/>
<evidence type="ECO:0000305" key="8">
    <source>
    </source>
</evidence>
<evidence type="ECO:0007744" key="9">
    <source>
        <dbReference type="PDB" id="1GKY"/>
    </source>
</evidence>
<evidence type="ECO:0007744" key="10">
    <source>
    </source>
</evidence>
<evidence type="ECO:0007744" key="11">
    <source>
    </source>
</evidence>
<evidence type="ECO:0007744" key="12">
    <source>
    </source>
</evidence>
<evidence type="ECO:0007744" key="13">
    <source>
    </source>
</evidence>
<evidence type="ECO:0007829" key="14">
    <source>
        <dbReference type="PDB" id="1EX7"/>
    </source>
</evidence>
<evidence type="ECO:0007829" key="15">
    <source>
        <dbReference type="PDB" id="1GKY"/>
    </source>
</evidence>
<reference key="1">
    <citation type="journal article" date="1992" name="J. Biol. Chem.">
        <title>Cloning and expression of the essential gene for guanylate kinase from yeast.</title>
        <authorList>
            <person name="Konrad M."/>
        </authorList>
    </citation>
    <scope>NUCLEOTIDE SEQUENCE [GENOMIC DNA]</scope>
    <scope>FUNCTION</scope>
    <scope>CATALYTIC ACTIVITY</scope>
</reference>
<reference key="2">
    <citation type="journal article" date="1997" name="Nature">
        <title>The nucleotide sequence of Saccharomyces cerevisiae chromosome IV.</title>
        <authorList>
            <person name="Jacq C."/>
            <person name="Alt-Moerbe J."/>
            <person name="Andre B."/>
            <person name="Arnold W."/>
            <person name="Bahr A."/>
            <person name="Ballesta J.P.G."/>
            <person name="Bargues M."/>
            <person name="Baron L."/>
            <person name="Becker A."/>
            <person name="Biteau N."/>
            <person name="Bloecker H."/>
            <person name="Blugeon C."/>
            <person name="Boskovic J."/>
            <person name="Brandt P."/>
            <person name="Brueckner M."/>
            <person name="Buitrago M.J."/>
            <person name="Coster F."/>
            <person name="Delaveau T."/>
            <person name="del Rey F."/>
            <person name="Dujon B."/>
            <person name="Eide L.G."/>
            <person name="Garcia-Cantalejo J.M."/>
            <person name="Goffeau A."/>
            <person name="Gomez-Peris A."/>
            <person name="Granotier C."/>
            <person name="Hanemann V."/>
            <person name="Hankeln T."/>
            <person name="Hoheisel J.D."/>
            <person name="Jaeger W."/>
            <person name="Jimenez A."/>
            <person name="Jonniaux J.-L."/>
            <person name="Kraemer C."/>
            <person name="Kuester H."/>
            <person name="Laamanen P."/>
            <person name="Legros Y."/>
            <person name="Louis E.J."/>
            <person name="Moeller-Rieker S."/>
            <person name="Monnet A."/>
            <person name="Moro M."/>
            <person name="Mueller-Auer S."/>
            <person name="Nussbaumer B."/>
            <person name="Paricio N."/>
            <person name="Paulin L."/>
            <person name="Perea J."/>
            <person name="Perez-Alonso M."/>
            <person name="Perez-Ortin J.E."/>
            <person name="Pohl T.M."/>
            <person name="Prydz H."/>
            <person name="Purnelle B."/>
            <person name="Rasmussen S.W."/>
            <person name="Remacha M.A."/>
            <person name="Revuelta J.L."/>
            <person name="Rieger M."/>
            <person name="Salom D."/>
            <person name="Saluz H.P."/>
            <person name="Saiz J.E."/>
            <person name="Saren A.-M."/>
            <person name="Schaefer M."/>
            <person name="Scharfe M."/>
            <person name="Schmidt E.R."/>
            <person name="Schneider C."/>
            <person name="Scholler P."/>
            <person name="Schwarz S."/>
            <person name="Soler-Mira A."/>
            <person name="Urrestarazu L.A."/>
            <person name="Verhasselt P."/>
            <person name="Vissers S."/>
            <person name="Voet M."/>
            <person name="Volckaert G."/>
            <person name="Wagner G."/>
            <person name="Wambutt R."/>
            <person name="Wedler E."/>
            <person name="Wedler H."/>
            <person name="Woelfl S."/>
            <person name="Harris D.E."/>
            <person name="Bowman S."/>
            <person name="Brown D."/>
            <person name="Churcher C.M."/>
            <person name="Connor R."/>
            <person name="Dedman K."/>
            <person name="Gentles S."/>
            <person name="Hamlin N."/>
            <person name="Hunt S."/>
            <person name="Jones L."/>
            <person name="McDonald S."/>
            <person name="Murphy L.D."/>
            <person name="Niblett D."/>
            <person name="Odell C."/>
            <person name="Oliver K."/>
            <person name="Rajandream M.A."/>
            <person name="Richards C."/>
            <person name="Shore L."/>
            <person name="Walsh S.V."/>
            <person name="Barrell B.G."/>
            <person name="Dietrich F.S."/>
            <person name="Mulligan J.T."/>
            <person name="Allen E."/>
            <person name="Araujo R."/>
            <person name="Aviles E."/>
            <person name="Berno A."/>
            <person name="Carpenter J."/>
            <person name="Chen E."/>
            <person name="Cherry J.M."/>
            <person name="Chung E."/>
            <person name="Duncan M."/>
            <person name="Hunicke-Smith S."/>
            <person name="Hyman R.W."/>
            <person name="Komp C."/>
            <person name="Lashkari D."/>
            <person name="Lew H."/>
            <person name="Lin D."/>
            <person name="Mosedale D."/>
            <person name="Nakahara K."/>
            <person name="Namath A."/>
            <person name="Oefner P."/>
            <person name="Oh C."/>
            <person name="Petel F.X."/>
            <person name="Roberts D."/>
            <person name="Schramm S."/>
            <person name="Schroeder M."/>
            <person name="Shogren T."/>
            <person name="Shroff N."/>
            <person name="Winant A."/>
            <person name="Yelton M.A."/>
            <person name="Botstein D."/>
            <person name="Davis R.W."/>
            <person name="Johnston M."/>
            <person name="Andrews S."/>
            <person name="Brinkman R."/>
            <person name="Cooper J."/>
            <person name="Ding H."/>
            <person name="Du Z."/>
            <person name="Favello A."/>
            <person name="Fulton L."/>
            <person name="Gattung S."/>
            <person name="Greco T."/>
            <person name="Hallsworth K."/>
            <person name="Hawkins J."/>
            <person name="Hillier L.W."/>
            <person name="Jier M."/>
            <person name="Johnson D."/>
            <person name="Johnston L."/>
            <person name="Kirsten J."/>
            <person name="Kucaba T."/>
            <person name="Langston Y."/>
            <person name="Latreille P."/>
            <person name="Le T."/>
            <person name="Mardis E."/>
            <person name="Menezes S."/>
            <person name="Miller N."/>
            <person name="Nhan M."/>
            <person name="Pauley A."/>
            <person name="Peluso D."/>
            <person name="Rifkin L."/>
            <person name="Riles L."/>
            <person name="Taich A."/>
            <person name="Trevaskis E."/>
            <person name="Vignati D."/>
            <person name="Wilcox L."/>
            <person name="Wohldman P."/>
            <person name="Vaudin M."/>
            <person name="Wilson R."/>
            <person name="Waterston R."/>
            <person name="Albermann K."/>
            <person name="Hani J."/>
            <person name="Heumann K."/>
            <person name="Kleine K."/>
            <person name="Mewes H.-W."/>
            <person name="Zollner A."/>
            <person name="Zaccaria P."/>
        </authorList>
    </citation>
    <scope>NUCLEOTIDE SEQUENCE [LARGE SCALE GENOMIC DNA]</scope>
    <source>
        <strain>ATCC 204508 / S288c</strain>
    </source>
</reference>
<reference key="3">
    <citation type="journal article" date="2014" name="G3 (Bethesda)">
        <title>The reference genome sequence of Saccharomyces cerevisiae: Then and now.</title>
        <authorList>
            <person name="Engel S.R."/>
            <person name="Dietrich F.S."/>
            <person name="Fisk D.G."/>
            <person name="Binkley G."/>
            <person name="Balakrishnan R."/>
            <person name="Costanzo M.C."/>
            <person name="Dwight S.S."/>
            <person name="Hitz B.C."/>
            <person name="Karra K."/>
            <person name="Nash R.S."/>
            <person name="Weng S."/>
            <person name="Wong E.D."/>
            <person name="Lloyd P."/>
            <person name="Skrzypek M.S."/>
            <person name="Miyasato S.R."/>
            <person name="Simison M."/>
            <person name="Cherry J.M."/>
        </authorList>
    </citation>
    <scope>GENOME REANNOTATION</scope>
    <source>
        <strain>ATCC 204508 / S288c</strain>
    </source>
</reference>
<reference key="4">
    <citation type="journal article" date="1989" name="Eur. J. Biochem.">
        <title>Guanylate kinase from Saccharomyces cerevisiae. Isolation and characterization, crystallization and preliminary X-ray analysis, amino acid sequence and comparison with adenylate kinases.</title>
        <authorList>
            <person name="Berger A."/>
            <person name="Schiltz E."/>
            <person name="Schulz G.E."/>
        </authorList>
    </citation>
    <scope>PROTEIN SEQUENCE OF 2-187</scope>
    <scope>CLEAVAGE OF INITIATOR METHIONINE</scope>
    <scope>ACETYLATION AT SER-2</scope>
</reference>
<reference key="5">
    <citation type="journal article" date="2003" name="Nature">
        <title>Global analysis of protein expression in yeast.</title>
        <authorList>
            <person name="Ghaemmaghami S."/>
            <person name="Huh W.-K."/>
            <person name="Bower K."/>
            <person name="Howson R.W."/>
            <person name="Belle A."/>
            <person name="Dephoure N."/>
            <person name="O'Shea E.K."/>
            <person name="Weissman J.S."/>
        </authorList>
    </citation>
    <scope>LEVEL OF PROTEIN EXPRESSION [LARGE SCALE ANALYSIS]</scope>
</reference>
<reference key="6">
    <citation type="journal article" date="2007" name="J. Proteome Res.">
        <title>Large-scale phosphorylation analysis of alpha-factor-arrested Saccharomyces cerevisiae.</title>
        <authorList>
            <person name="Li X."/>
            <person name="Gerber S.A."/>
            <person name="Rudner A.D."/>
            <person name="Beausoleil S.A."/>
            <person name="Haas W."/>
            <person name="Villen J."/>
            <person name="Elias J.E."/>
            <person name="Gygi S.P."/>
        </authorList>
    </citation>
    <scope>PHOSPHORYLATION [LARGE SCALE ANALYSIS] AT SER-149</scope>
    <scope>IDENTIFICATION BY MASS SPECTROMETRY [LARGE SCALE ANALYSIS]</scope>
    <source>
        <strain>ADR376</strain>
    </source>
</reference>
<reference key="7">
    <citation type="journal article" date="2007" name="Proc. Natl. Acad. Sci. U.S.A.">
        <title>Analysis of phosphorylation sites on proteins from Saccharomyces cerevisiae by electron transfer dissociation (ETD) mass spectrometry.</title>
        <authorList>
            <person name="Chi A."/>
            <person name="Huttenhower C."/>
            <person name="Geer L.Y."/>
            <person name="Coon J.J."/>
            <person name="Syka J.E.P."/>
            <person name="Bai D.L."/>
            <person name="Shabanowitz J."/>
            <person name="Burke D.J."/>
            <person name="Troyanskaya O.G."/>
            <person name="Hunt D.F."/>
        </authorList>
    </citation>
    <scope>PHOSPHORYLATION [LARGE SCALE ANALYSIS] AT SER-149</scope>
    <scope>IDENTIFICATION BY MASS SPECTROMETRY [LARGE SCALE ANALYSIS]</scope>
</reference>
<reference key="8">
    <citation type="journal article" date="2008" name="Mol. Cell. Proteomics">
        <title>A multidimensional chromatography technology for in-depth phosphoproteome analysis.</title>
        <authorList>
            <person name="Albuquerque C.P."/>
            <person name="Smolka M.B."/>
            <person name="Payne S.H."/>
            <person name="Bafna V."/>
            <person name="Eng J."/>
            <person name="Zhou H."/>
        </authorList>
    </citation>
    <scope>PHOSPHORYLATION [LARGE SCALE ANALYSIS] AT SER-149</scope>
    <scope>IDENTIFICATION BY MASS SPECTROMETRY [LARGE SCALE ANALYSIS]</scope>
</reference>
<reference key="9">
    <citation type="journal article" date="2009" name="Science">
        <title>Global analysis of Cdk1 substrate phosphorylation sites provides insights into evolution.</title>
        <authorList>
            <person name="Holt L.J."/>
            <person name="Tuch B.B."/>
            <person name="Villen J."/>
            <person name="Johnson A.D."/>
            <person name="Gygi S.P."/>
            <person name="Morgan D.O."/>
        </authorList>
    </citation>
    <scope>PHOSPHORYLATION [LARGE SCALE ANALYSIS] AT SER-149 AND TYR-157</scope>
    <scope>IDENTIFICATION BY MASS SPECTROMETRY [LARGE SCALE ANALYSIS]</scope>
</reference>
<reference key="10">
    <citation type="journal article" date="1990" name="J. Mol. Biol.">
        <title>Three-dimensional structure of the complex of guanylate kinase from yeast with its substrate GMP.</title>
        <authorList>
            <person name="Stehle T."/>
            <person name="Schulz G.E."/>
        </authorList>
    </citation>
    <scope>X-RAY CRYSTALLOGRAPHY (2.0 ANGSTROMS)</scope>
</reference>
<reference evidence="9" key="11">
    <citation type="journal article" date="1992" name="J. Mol. Biol.">
        <title>Refined structure of the complex between guanylate kinase and its substrate GMP at 2.0-A resolution.</title>
        <authorList>
            <person name="Stehle T."/>
            <person name="Schulz G.E."/>
        </authorList>
    </citation>
    <scope>X-RAY CRYSTALLOGRAPHY (2.0 ANGSTROMS) OF 2-187 IN COMPLEX WITH GMP</scope>
</reference>
<organism>
    <name type="scientific">Saccharomyces cerevisiae (strain ATCC 204508 / S288c)</name>
    <name type="common">Baker's yeast</name>
    <dbReference type="NCBI Taxonomy" id="559292"/>
    <lineage>
        <taxon>Eukaryota</taxon>
        <taxon>Fungi</taxon>
        <taxon>Dikarya</taxon>
        <taxon>Ascomycota</taxon>
        <taxon>Saccharomycotina</taxon>
        <taxon>Saccharomycetes</taxon>
        <taxon>Saccharomycetales</taxon>
        <taxon>Saccharomycetaceae</taxon>
        <taxon>Saccharomyces</taxon>
    </lineage>
</organism>
<sequence>MSRPIVISGPSGTGKSTLLKKLFAEYPDSFGFSVSSTTRTPRAGEVNGKDYNFVSVDEFKSMIKNNEFIEWAQFSGNYYGSTVASVKQVSKSGKTCILDIDMQGVKSVKAIPELNARFLFIAPPSVEDLKKRLEGRGTETEESINKRLSAAQAELAYAETGAHDKVIVNDDLDKAYKELKDFIFAEK</sequence>
<name>KGUA_YEAST</name>
<proteinExistence type="evidence at protein level"/>
<feature type="initiator methionine" description="Removed" evidence="6">
    <location>
        <position position="1"/>
    </location>
</feature>
<feature type="chain" id="PRO_0000170655" description="Guanylate kinase">
    <location>
        <begin position="2"/>
        <end position="187"/>
    </location>
</feature>
<feature type="domain" description="Guanylate kinase-like" evidence="1">
    <location>
        <begin position="2"/>
        <end position="184"/>
    </location>
</feature>
<feature type="binding site" evidence="1">
    <location>
        <begin position="9"/>
        <end position="16"/>
    </location>
    <ligand>
        <name>ATP</name>
        <dbReference type="ChEBI" id="CHEBI:30616"/>
    </ligand>
</feature>
<feature type="binding site" evidence="2 5 9">
    <location>
        <position position="35"/>
    </location>
    <ligand>
        <name>GMP</name>
        <dbReference type="ChEBI" id="CHEBI:58115"/>
    </ligand>
</feature>
<feature type="binding site" evidence="2 5 9">
    <location>
        <begin position="39"/>
        <end position="42"/>
    </location>
    <ligand>
        <name>GMP</name>
        <dbReference type="ChEBI" id="CHEBI:58115"/>
    </ligand>
</feature>
<feature type="binding site" evidence="2 5 9">
    <location>
        <position position="51"/>
    </location>
    <ligand>
        <name>GMP</name>
        <dbReference type="ChEBI" id="CHEBI:58115"/>
    </ligand>
</feature>
<feature type="binding site" evidence="2 5 9">
    <location>
        <position position="70"/>
    </location>
    <ligand>
        <name>GMP</name>
        <dbReference type="ChEBI" id="CHEBI:58115"/>
    </ligand>
</feature>
<feature type="binding site" evidence="2 5 9">
    <location>
        <begin position="79"/>
        <end position="81"/>
    </location>
    <ligand>
        <name>GMP</name>
        <dbReference type="ChEBI" id="CHEBI:58115"/>
    </ligand>
</feature>
<feature type="binding site" evidence="2 5 9">
    <location>
        <position position="101"/>
    </location>
    <ligand>
        <name>GMP</name>
        <dbReference type="ChEBI" id="CHEBI:58115"/>
    </ligand>
</feature>
<feature type="modified residue" description="N-acetylserine" evidence="2 6">
    <location>
        <position position="2"/>
    </location>
</feature>
<feature type="modified residue" description="Phosphoserine" evidence="10 11 12 13">
    <location>
        <position position="149"/>
    </location>
</feature>
<feature type="modified residue" description="Phosphotyrosine" evidence="13">
    <location>
        <position position="157"/>
    </location>
</feature>
<feature type="strand" evidence="14">
    <location>
        <begin position="5"/>
        <end position="8"/>
    </location>
</feature>
<feature type="helix" evidence="14">
    <location>
        <begin position="15"/>
        <end position="25"/>
    </location>
</feature>
<feature type="turn" evidence="14">
    <location>
        <begin position="27"/>
        <end position="29"/>
    </location>
</feature>
<feature type="strand" evidence="14">
    <location>
        <begin position="30"/>
        <end position="32"/>
    </location>
</feature>
<feature type="strand" evidence="15">
    <location>
        <begin position="35"/>
        <end position="37"/>
    </location>
</feature>
<feature type="turn" evidence="14">
    <location>
        <begin position="47"/>
        <end position="49"/>
    </location>
</feature>
<feature type="strand" evidence="15">
    <location>
        <begin position="50"/>
        <end position="53"/>
    </location>
</feature>
<feature type="helix" evidence="14">
    <location>
        <begin position="56"/>
        <end position="64"/>
    </location>
</feature>
<feature type="strand" evidence="14">
    <location>
        <begin position="68"/>
        <end position="74"/>
    </location>
</feature>
<feature type="strand" evidence="14">
    <location>
        <begin position="77"/>
        <end position="82"/>
    </location>
</feature>
<feature type="helix" evidence="14">
    <location>
        <begin position="83"/>
        <end position="92"/>
    </location>
</feature>
<feature type="strand" evidence="14">
    <location>
        <begin position="94"/>
        <end position="99"/>
    </location>
</feature>
<feature type="helix" evidence="14">
    <location>
        <begin position="102"/>
        <end position="109"/>
    </location>
</feature>
<feature type="helix" evidence="14">
    <location>
        <begin position="112"/>
        <end position="114"/>
    </location>
</feature>
<feature type="strand" evidence="14">
    <location>
        <begin position="117"/>
        <end position="122"/>
    </location>
</feature>
<feature type="helix" evidence="14">
    <location>
        <begin position="126"/>
        <end position="136"/>
    </location>
</feature>
<feature type="helix" evidence="14">
    <location>
        <begin position="141"/>
        <end position="158"/>
    </location>
</feature>
<feature type="turn" evidence="14">
    <location>
        <begin position="159"/>
        <end position="161"/>
    </location>
</feature>
<feature type="strand" evidence="14">
    <location>
        <begin position="163"/>
        <end position="168"/>
    </location>
</feature>
<feature type="helix" evidence="14">
    <location>
        <begin position="172"/>
        <end position="183"/>
    </location>
</feature>
<comment type="function">
    <text evidence="8">Catalyzes the reversible transfer of the terminal phosphoryl group of ATP to the acceptor molecule GMP. Essential for recycling GMP and indirectly, cGMP.</text>
</comment>
<comment type="catalytic activity">
    <reaction evidence="3">
        <text>GMP + ATP = GDP + ADP</text>
        <dbReference type="Rhea" id="RHEA:20780"/>
        <dbReference type="ChEBI" id="CHEBI:30616"/>
        <dbReference type="ChEBI" id="CHEBI:58115"/>
        <dbReference type="ChEBI" id="CHEBI:58189"/>
        <dbReference type="ChEBI" id="CHEBI:456216"/>
        <dbReference type="EC" id="2.7.4.8"/>
    </reaction>
    <physiologicalReaction direction="left-to-right" evidence="8">
        <dbReference type="Rhea" id="RHEA:20781"/>
    </physiologicalReaction>
</comment>
<comment type="subunit">
    <text>Monomer.</text>
</comment>
<comment type="miscellaneous">
    <text evidence="4">Present with 20500 molecules/cell in log phase SD medium.</text>
</comment>
<comment type="similarity">
    <text evidence="7">Belongs to the guanylate kinase family.</text>
</comment>
<accession>P15454</accession>
<accession>D6VT79</accession>